<sequence>MDTYDELSLEASKFIQDLTLYEASKDGLFRVDKGLSNNPEFEETKRIFAAKMAKIHLQNQQKSIPDTGISEGNGLTHQYNYSLPKSVEEGPVIYNGLSNSSVGPSDYKTYRESYKGKPDIDSADRSEESVFKHDSEIMLPSPLGKVGNTIPTQQFTSKKAISPSIESLERERTIKNNITGFENYRLCNSSSMKNCKPHQNSRHGEVEDTMAENFTENKTPFKQCSALISSSVTFGDDTHTNIPQKKLFNLPSTSSINTQNNSDDVYLSKTNAAKEFHGEQRGLCSTNSLGFGNPNDVISASYCVGYNDNFPGEIKQKQSPHYTFHSGHSSVDEQPQAIPFCCKDSSGQGPASTIDSDHTDILQDSSALMKIKLPCQTLSQSSKQGSSKAEKKLEAITRHVEQEMDAHNKADYFGTCVKCSKGVYGASQACQAMGNLYHNGCFICSACSRKLRGKAFYFVNGKVYCEEDFLYSGFHQSADRCFVCGHWIMDMILQALGKSFHPGCFRCVVCNECLDGVPFTVDMENKIYCVKDYHKILAPKCAVCSLPILPSEGTDETIRVVSMDKDYHIDCYRCECCALELNNEDDHRCYPLDGHLFCHNCHLKYLENHNLS</sequence>
<accession>Q06BR1</accession>
<reference key="1">
    <citation type="journal article" date="2008" name="Dev. Cell">
        <title>Ajuba LIM proteins are snail/slug corepressors required for neural crest development in Xenopus.</title>
        <authorList>
            <person name="Langer E.M."/>
            <person name="Feng Y."/>
            <person name="Zhaoyuan H."/>
            <person name="Rauscher F.J. III"/>
            <person name="Kroll K.L."/>
            <person name="Longmore G.D."/>
        </authorList>
    </citation>
    <scope>NUCLEOTIDE SEQUENCE [MRNA]</scope>
    <scope>FUNCTION</scope>
    <scope>INTERACTION WITH SNAI1</scope>
</reference>
<keyword id="KW-0963">Cytoplasm</keyword>
<keyword id="KW-0440">LIM domain</keyword>
<keyword id="KW-0479">Metal-binding</keyword>
<keyword id="KW-0539">Nucleus</keyword>
<keyword id="KW-1185">Reference proteome</keyword>
<keyword id="KW-0677">Repeat</keyword>
<keyword id="KW-0678">Repressor</keyword>
<keyword id="KW-0804">Transcription</keyword>
<keyword id="KW-0805">Transcription regulation</keyword>
<keyword id="KW-0862">Zinc</keyword>
<name>LIMD1_XENLA</name>
<evidence type="ECO:0000255" key="1">
    <source>
        <dbReference type="PROSITE-ProRule" id="PRU00125"/>
    </source>
</evidence>
<evidence type="ECO:0000269" key="2">
    <source>
    </source>
</evidence>
<evidence type="ECO:0000305" key="3"/>
<gene>
    <name type="primary">limd1</name>
</gene>
<proteinExistence type="evidence at protein level"/>
<protein>
    <recommendedName>
        <fullName>LIM domain-containing protein 1</fullName>
    </recommendedName>
</protein>
<organism>
    <name type="scientific">Xenopus laevis</name>
    <name type="common">African clawed frog</name>
    <dbReference type="NCBI Taxonomy" id="8355"/>
    <lineage>
        <taxon>Eukaryota</taxon>
        <taxon>Metazoa</taxon>
        <taxon>Chordata</taxon>
        <taxon>Craniata</taxon>
        <taxon>Vertebrata</taxon>
        <taxon>Euteleostomi</taxon>
        <taxon>Amphibia</taxon>
        <taxon>Batrachia</taxon>
        <taxon>Anura</taxon>
        <taxon>Pipoidea</taxon>
        <taxon>Pipidae</taxon>
        <taxon>Xenopodinae</taxon>
        <taxon>Xenopus</taxon>
        <taxon>Xenopus</taxon>
    </lineage>
</organism>
<comment type="function">
    <text evidence="2">Acts as a transcriptional corepressor for snai1 and snai2/slug and plays a role in regulating neural crest development.</text>
</comment>
<comment type="subunit">
    <text evidence="2">Interacts with snai1.</text>
</comment>
<comment type="subcellular location">
    <subcellularLocation>
        <location evidence="3">Cytoplasm</location>
    </subcellularLocation>
    <subcellularLocation>
        <location evidence="3">Nucleus</location>
    </subcellularLocation>
</comment>
<comment type="similarity">
    <text evidence="3">Belongs to the zyxin/ajuba family.</text>
</comment>
<feature type="chain" id="PRO_0000416962" description="LIM domain-containing protein 1">
    <location>
        <begin position="1"/>
        <end position="612"/>
    </location>
</feature>
<feature type="domain" description="LIM zinc-binding 1" evidence="1">
    <location>
        <begin position="414"/>
        <end position="475"/>
    </location>
</feature>
<feature type="domain" description="LIM zinc-binding 2" evidence="1">
    <location>
        <begin position="479"/>
        <end position="539"/>
    </location>
</feature>
<feature type="domain" description="LIM zinc-binding 3" evidence="1">
    <location>
        <begin position="540"/>
        <end position="608"/>
    </location>
</feature>
<dbReference type="EMBL" id="DQ913740">
    <property type="protein sequence ID" value="ABI84194.1"/>
    <property type="molecule type" value="mRNA"/>
</dbReference>
<dbReference type="RefSeq" id="NP_001090194.1">
    <property type="nucleotide sequence ID" value="NM_001096725.1"/>
</dbReference>
<dbReference type="BioGRID" id="607792">
    <property type="interactions" value="1"/>
</dbReference>
<dbReference type="IntAct" id="Q06BR1">
    <property type="interactions" value="1"/>
</dbReference>
<dbReference type="GeneID" id="779085"/>
<dbReference type="KEGG" id="xla:779085"/>
<dbReference type="AGR" id="Xenbase:XB-GENE-1017241"/>
<dbReference type="CTD" id="779085"/>
<dbReference type="Xenbase" id="XB-GENE-1017241">
    <property type="gene designation" value="limd1.L"/>
</dbReference>
<dbReference type="OrthoDB" id="25414at2759"/>
<dbReference type="Proteomes" id="UP000186698">
    <property type="component" value="Chromosome 6L"/>
</dbReference>
<dbReference type="Bgee" id="779085">
    <property type="expression patterns" value="Expressed in spleen and 19 other cell types or tissues"/>
</dbReference>
<dbReference type="GO" id="GO:0005912">
    <property type="term" value="C:adherens junction"/>
    <property type="evidence" value="ECO:0000318"/>
    <property type="project" value="GO_Central"/>
</dbReference>
<dbReference type="GO" id="GO:0005634">
    <property type="term" value="C:nucleus"/>
    <property type="evidence" value="ECO:0000318"/>
    <property type="project" value="GO_Central"/>
</dbReference>
<dbReference type="GO" id="GO:0000932">
    <property type="term" value="C:P-body"/>
    <property type="evidence" value="ECO:0000318"/>
    <property type="project" value="GO_Central"/>
</dbReference>
<dbReference type="GO" id="GO:0005667">
    <property type="term" value="C:transcription regulator complex"/>
    <property type="evidence" value="ECO:0000318"/>
    <property type="project" value="GO_Central"/>
</dbReference>
<dbReference type="GO" id="GO:0046872">
    <property type="term" value="F:metal ion binding"/>
    <property type="evidence" value="ECO:0007669"/>
    <property type="project" value="UniProtKB-KW"/>
</dbReference>
<dbReference type="GO" id="GO:0003714">
    <property type="term" value="F:transcription corepressor activity"/>
    <property type="evidence" value="ECO:0000315"/>
    <property type="project" value="UniProtKB"/>
</dbReference>
<dbReference type="GO" id="GO:0007010">
    <property type="term" value="P:cytoskeleton organization"/>
    <property type="evidence" value="ECO:0000318"/>
    <property type="project" value="GO_Central"/>
</dbReference>
<dbReference type="GO" id="GO:0035331">
    <property type="term" value="P:negative regulation of hippo signaling"/>
    <property type="evidence" value="ECO:0000318"/>
    <property type="project" value="GO_Central"/>
</dbReference>
<dbReference type="GO" id="GO:0014032">
    <property type="term" value="P:neural crest cell development"/>
    <property type="evidence" value="ECO:0000315"/>
    <property type="project" value="UniProtKB"/>
</dbReference>
<dbReference type="GO" id="GO:0006355">
    <property type="term" value="P:regulation of DNA-templated transcription"/>
    <property type="evidence" value="ECO:0000318"/>
    <property type="project" value="GO_Central"/>
</dbReference>
<dbReference type="GO" id="GO:0001666">
    <property type="term" value="P:response to hypoxia"/>
    <property type="evidence" value="ECO:0000318"/>
    <property type="project" value="GO_Central"/>
</dbReference>
<dbReference type="CDD" id="cd09352">
    <property type="entry name" value="LIM1_Ajuba_like"/>
    <property type="match status" value="1"/>
</dbReference>
<dbReference type="CDD" id="cd09355">
    <property type="entry name" value="LIM2_Ajuba_like"/>
    <property type="match status" value="1"/>
</dbReference>
<dbReference type="CDD" id="cd09438">
    <property type="entry name" value="LIM3_Ajuba_like"/>
    <property type="match status" value="1"/>
</dbReference>
<dbReference type="FunFam" id="2.10.110.10:FF:000028">
    <property type="entry name" value="LIM domain-containing protein 1"/>
    <property type="match status" value="1"/>
</dbReference>
<dbReference type="FunFam" id="2.10.110.10:FF:000036">
    <property type="entry name" value="LIM domain-containing protein 1"/>
    <property type="match status" value="1"/>
</dbReference>
<dbReference type="FunFam" id="2.10.110.10:FF:000037">
    <property type="entry name" value="LIM domain-containing protein 1"/>
    <property type="match status" value="1"/>
</dbReference>
<dbReference type="Gene3D" id="2.10.110.10">
    <property type="entry name" value="Cysteine Rich Protein"/>
    <property type="match status" value="3"/>
</dbReference>
<dbReference type="InterPro" id="IPR047172">
    <property type="entry name" value="Ajuba-like"/>
</dbReference>
<dbReference type="InterPro" id="IPR047245">
    <property type="entry name" value="Ajuba-like_LIM1"/>
</dbReference>
<dbReference type="InterPro" id="IPR047247">
    <property type="entry name" value="Ajuba-like_LIM2"/>
</dbReference>
<dbReference type="InterPro" id="IPR047248">
    <property type="entry name" value="Ajuba-like_LIM3"/>
</dbReference>
<dbReference type="InterPro" id="IPR001781">
    <property type="entry name" value="Znf_LIM"/>
</dbReference>
<dbReference type="PANTHER" id="PTHR24219:SF3">
    <property type="entry name" value="LIM DOMAIN-CONTAINING PROTEIN 1"/>
    <property type="match status" value="1"/>
</dbReference>
<dbReference type="PANTHER" id="PTHR24219">
    <property type="entry name" value="LIM DOMAIN-CONTAINING PROTEIN JUB"/>
    <property type="match status" value="1"/>
</dbReference>
<dbReference type="Pfam" id="PF00412">
    <property type="entry name" value="LIM"/>
    <property type="match status" value="3"/>
</dbReference>
<dbReference type="SMART" id="SM00132">
    <property type="entry name" value="LIM"/>
    <property type="match status" value="3"/>
</dbReference>
<dbReference type="SUPFAM" id="SSF57716">
    <property type="entry name" value="Glucocorticoid receptor-like (DNA-binding domain)"/>
    <property type="match status" value="2"/>
</dbReference>
<dbReference type="PROSITE" id="PS00478">
    <property type="entry name" value="LIM_DOMAIN_1"/>
    <property type="match status" value="2"/>
</dbReference>
<dbReference type="PROSITE" id="PS50023">
    <property type="entry name" value="LIM_DOMAIN_2"/>
    <property type="match status" value="3"/>
</dbReference>